<name>AROE_DESHY</name>
<comment type="function">
    <text evidence="1">Involved in the biosynthesis of the chorismate, which leads to the biosynthesis of aromatic amino acids. Catalyzes the reversible NADPH linked reduction of 3-dehydroshikimate (DHSA) to yield shikimate (SA).</text>
</comment>
<comment type="catalytic activity">
    <reaction evidence="1">
        <text>shikimate + NADP(+) = 3-dehydroshikimate + NADPH + H(+)</text>
        <dbReference type="Rhea" id="RHEA:17737"/>
        <dbReference type="ChEBI" id="CHEBI:15378"/>
        <dbReference type="ChEBI" id="CHEBI:16630"/>
        <dbReference type="ChEBI" id="CHEBI:36208"/>
        <dbReference type="ChEBI" id="CHEBI:57783"/>
        <dbReference type="ChEBI" id="CHEBI:58349"/>
        <dbReference type="EC" id="1.1.1.25"/>
    </reaction>
</comment>
<comment type="pathway">
    <text evidence="1">Metabolic intermediate biosynthesis; chorismate biosynthesis; chorismate from D-erythrose 4-phosphate and phosphoenolpyruvate: step 4/7.</text>
</comment>
<comment type="subunit">
    <text evidence="1">Homodimer.</text>
</comment>
<comment type="similarity">
    <text evidence="1">Belongs to the shikimate dehydrogenase family.</text>
</comment>
<comment type="sequence caution" evidence="2">
    <conflict type="erroneous initiation">
        <sequence resource="EMBL-CDS" id="BAE84183"/>
    </conflict>
    <text>Extended N-terminus.</text>
</comment>
<evidence type="ECO:0000255" key="1">
    <source>
        <dbReference type="HAMAP-Rule" id="MF_00222"/>
    </source>
</evidence>
<evidence type="ECO:0000305" key="2"/>
<feature type="chain" id="PRO_0000325116" description="Shikimate dehydrogenase (NADP(+))">
    <location>
        <begin position="1"/>
        <end position="273"/>
    </location>
</feature>
<feature type="active site" description="Proton acceptor" evidence="1">
    <location>
        <position position="66"/>
    </location>
</feature>
<feature type="binding site" evidence="1">
    <location>
        <begin position="15"/>
        <end position="17"/>
    </location>
    <ligand>
        <name>shikimate</name>
        <dbReference type="ChEBI" id="CHEBI:36208"/>
    </ligand>
</feature>
<feature type="binding site" evidence="1">
    <location>
        <position position="62"/>
    </location>
    <ligand>
        <name>shikimate</name>
        <dbReference type="ChEBI" id="CHEBI:36208"/>
    </ligand>
</feature>
<feature type="binding site" evidence="1">
    <location>
        <position position="78"/>
    </location>
    <ligand>
        <name>NADP(+)</name>
        <dbReference type="ChEBI" id="CHEBI:58349"/>
    </ligand>
</feature>
<feature type="binding site" evidence="1">
    <location>
        <position position="87"/>
    </location>
    <ligand>
        <name>shikimate</name>
        <dbReference type="ChEBI" id="CHEBI:36208"/>
    </ligand>
</feature>
<feature type="binding site" evidence="1">
    <location>
        <position position="102"/>
    </location>
    <ligand>
        <name>shikimate</name>
        <dbReference type="ChEBI" id="CHEBI:36208"/>
    </ligand>
</feature>
<feature type="binding site" evidence="1">
    <location>
        <begin position="126"/>
        <end position="130"/>
    </location>
    <ligand>
        <name>NADP(+)</name>
        <dbReference type="ChEBI" id="CHEBI:58349"/>
    </ligand>
</feature>
<feature type="binding site" evidence="1">
    <location>
        <begin position="149"/>
        <end position="154"/>
    </location>
    <ligand>
        <name>NADP(+)</name>
        <dbReference type="ChEBI" id="CHEBI:58349"/>
    </ligand>
</feature>
<feature type="binding site" evidence="1">
    <location>
        <position position="215"/>
    </location>
    <ligand>
        <name>NADP(+)</name>
        <dbReference type="ChEBI" id="CHEBI:58349"/>
    </ligand>
</feature>
<feature type="binding site" evidence="1">
    <location>
        <position position="238"/>
    </location>
    <ligand>
        <name>NADP(+)</name>
        <dbReference type="ChEBI" id="CHEBI:58349"/>
    </ligand>
</feature>
<gene>
    <name evidence="1" type="primary">aroE</name>
    <name type="ordered locus">DSY2394</name>
</gene>
<keyword id="KW-0028">Amino-acid biosynthesis</keyword>
<keyword id="KW-0057">Aromatic amino acid biosynthesis</keyword>
<keyword id="KW-0521">NADP</keyword>
<keyword id="KW-0560">Oxidoreductase</keyword>
<keyword id="KW-1185">Reference proteome</keyword>
<protein>
    <recommendedName>
        <fullName evidence="1">Shikimate dehydrogenase (NADP(+))</fullName>
        <shortName evidence="1">SDH</shortName>
        <ecNumber evidence="1">1.1.1.25</ecNumber>
    </recommendedName>
</protein>
<dbReference type="EC" id="1.1.1.25" evidence="1"/>
<dbReference type="EMBL" id="AP008230">
    <property type="protein sequence ID" value="BAE84183.1"/>
    <property type="status" value="ALT_INIT"/>
    <property type="molecule type" value="Genomic_DNA"/>
</dbReference>
<dbReference type="SMR" id="Q24UV9"/>
<dbReference type="STRING" id="138119.DSY2394"/>
<dbReference type="KEGG" id="dsy:DSY2394"/>
<dbReference type="eggNOG" id="COG0169">
    <property type="taxonomic scope" value="Bacteria"/>
</dbReference>
<dbReference type="HOGENOM" id="CLU_044063_4_1_9"/>
<dbReference type="UniPathway" id="UPA00053">
    <property type="reaction ID" value="UER00087"/>
</dbReference>
<dbReference type="Proteomes" id="UP000001946">
    <property type="component" value="Chromosome"/>
</dbReference>
<dbReference type="GO" id="GO:0005829">
    <property type="term" value="C:cytosol"/>
    <property type="evidence" value="ECO:0007669"/>
    <property type="project" value="TreeGrafter"/>
</dbReference>
<dbReference type="GO" id="GO:0050661">
    <property type="term" value="F:NADP binding"/>
    <property type="evidence" value="ECO:0007669"/>
    <property type="project" value="InterPro"/>
</dbReference>
<dbReference type="GO" id="GO:0004764">
    <property type="term" value="F:shikimate 3-dehydrogenase (NADP+) activity"/>
    <property type="evidence" value="ECO:0007669"/>
    <property type="project" value="UniProtKB-UniRule"/>
</dbReference>
<dbReference type="GO" id="GO:0008652">
    <property type="term" value="P:amino acid biosynthetic process"/>
    <property type="evidence" value="ECO:0007669"/>
    <property type="project" value="UniProtKB-KW"/>
</dbReference>
<dbReference type="GO" id="GO:0009073">
    <property type="term" value="P:aromatic amino acid family biosynthetic process"/>
    <property type="evidence" value="ECO:0007669"/>
    <property type="project" value="UniProtKB-KW"/>
</dbReference>
<dbReference type="GO" id="GO:0009423">
    <property type="term" value="P:chorismate biosynthetic process"/>
    <property type="evidence" value="ECO:0007669"/>
    <property type="project" value="UniProtKB-UniRule"/>
</dbReference>
<dbReference type="GO" id="GO:0019632">
    <property type="term" value="P:shikimate metabolic process"/>
    <property type="evidence" value="ECO:0007669"/>
    <property type="project" value="InterPro"/>
</dbReference>
<dbReference type="CDD" id="cd01065">
    <property type="entry name" value="NAD_bind_Shikimate_DH"/>
    <property type="match status" value="1"/>
</dbReference>
<dbReference type="Gene3D" id="3.40.50.10860">
    <property type="entry name" value="Leucine Dehydrogenase, chain A, domain 1"/>
    <property type="match status" value="1"/>
</dbReference>
<dbReference type="Gene3D" id="3.40.50.720">
    <property type="entry name" value="NAD(P)-binding Rossmann-like Domain"/>
    <property type="match status" value="1"/>
</dbReference>
<dbReference type="HAMAP" id="MF_00222">
    <property type="entry name" value="Shikimate_DH_AroE"/>
    <property type="match status" value="1"/>
</dbReference>
<dbReference type="InterPro" id="IPR046346">
    <property type="entry name" value="Aminoacid_DH-like_N_sf"/>
</dbReference>
<dbReference type="InterPro" id="IPR036291">
    <property type="entry name" value="NAD(P)-bd_dom_sf"/>
</dbReference>
<dbReference type="InterPro" id="IPR041121">
    <property type="entry name" value="SDH_C"/>
</dbReference>
<dbReference type="InterPro" id="IPR011342">
    <property type="entry name" value="Shikimate_DH"/>
</dbReference>
<dbReference type="InterPro" id="IPR013708">
    <property type="entry name" value="Shikimate_DH-bd_N"/>
</dbReference>
<dbReference type="InterPro" id="IPR022893">
    <property type="entry name" value="Shikimate_DH_fam"/>
</dbReference>
<dbReference type="InterPro" id="IPR006151">
    <property type="entry name" value="Shikm_DH/Glu-tRNA_Rdtase"/>
</dbReference>
<dbReference type="NCBIfam" id="TIGR00507">
    <property type="entry name" value="aroE"/>
    <property type="match status" value="1"/>
</dbReference>
<dbReference type="NCBIfam" id="NF001319">
    <property type="entry name" value="PRK00258.3-3"/>
    <property type="match status" value="1"/>
</dbReference>
<dbReference type="PANTHER" id="PTHR21089:SF1">
    <property type="entry name" value="BIFUNCTIONAL 3-DEHYDROQUINATE DEHYDRATASE_SHIKIMATE DEHYDROGENASE, CHLOROPLASTIC"/>
    <property type="match status" value="1"/>
</dbReference>
<dbReference type="PANTHER" id="PTHR21089">
    <property type="entry name" value="SHIKIMATE DEHYDROGENASE"/>
    <property type="match status" value="1"/>
</dbReference>
<dbReference type="Pfam" id="PF18317">
    <property type="entry name" value="SDH_C"/>
    <property type="match status" value="1"/>
</dbReference>
<dbReference type="Pfam" id="PF01488">
    <property type="entry name" value="Shikimate_DH"/>
    <property type="match status" value="1"/>
</dbReference>
<dbReference type="Pfam" id="PF08501">
    <property type="entry name" value="Shikimate_dh_N"/>
    <property type="match status" value="1"/>
</dbReference>
<dbReference type="SUPFAM" id="SSF53223">
    <property type="entry name" value="Aminoacid dehydrogenase-like, N-terminal domain"/>
    <property type="match status" value="1"/>
</dbReference>
<dbReference type="SUPFAM" id="SSF51735">
    <property type="entry name" value="NAD(P)-binding Rossmann-fold domains"/>
    <property type="match status" value="1"/>
</dbReference>
<reference key="1">
    <citation type="journal article" date="2006" name="J. Bacteriol.">
        <title>Complete genome sequence of the dehalorespiring bacterium Desulfitobacterium hafniense Y51 and comparison with Dehalococcoides ethenogenes 195.</title>
        <authorList>
            <person name="Nonaka H."/>
            <person name="Keresztes G."/>
            <person name="Shinoda Y."/>
            <person name="Ikenaga Y."/>
            <person name="Abe M."/>
            <person name="Naito K."/>
            <person name="Inatomi K."/>
            <person name="Furukawa K."/>
            <person name="Inui M."/>
            <person name="Yukawa H."/>
        </authorList>
    </citation>
    <scope>NUCLEOTIDE SEQUENCE [LARGE SCALE GENOMIC DNA]</scope>
    <source>
        <strain>Y51</strain>
    </source>
</reference>
<accession>Q24UV9</accession>
<sequence length="273" mass="29757">MVKHFAVIGDPIAHSLSPLMHNAGYKALNLAADYQKFQVSPEDLQEAVFGLKALGFSGWNVTVPHKETILPFLDELTEEAVRAGAVNTVKVDKGRLIGHNTDGSGFVRSLQEHMELDECKQIVILGAGGAAKGIAMALAPFGAQLCLMNRTPERGAELVEKILEGGGQARQEPWGRGEWLAQADCVIQTTSIGLKKEEYPFSLAGIRPGTLVVDIIFNPWETPFLHSAKAMGCKTVNGIDMLLYQGVNAWEFWLEDKAPVESMRKALYQALAV</sequence>
<organism>
    <name type="scientific">Desulfitobacterium hafniense (strain Y51)</name>
    <dbReference type="NCBI Taxonomy" id="138119"/>
    <lineage>
        <taxon>Bacteria</taxon>
        <taxon>Bacillati</taxon>
        <taxon>Bacillota</taxon>
        <taxon>Clostridia</taxon>
        <taxon>Eubacteriales</taxon>
        <taxon>Desulfitobacteriaceae</taxon>
        <taxon>Desulfitobacterium</taxon>
    </lineage>
</organism>
<proteinExistence type="inferred from homology"/>